<feature type="chain" id="PRO_0000127358" description="Myogenic factor 6">
    <location>
        <begin position="1"/>
        <end position="239"/>
    </location>
</feature>
<feature type="domain" description="bHLH" evidence="2">
    <location>
        <begin position="96"/>
        <end position="147"/>
    </location>
</feature>
<feature type="region of interest" description="Disordered" evidence="3">
    <location>
        <begin position="27"/>
        <end position="64"/>
    </location>
</feature>
<feature type="region of interest" description="Disordered" evidence="3">
    <location>
        <begin position="155"/>
        <end position="184"/>
    </location>
</feature>
<feature type="sequence conflict" description="In Ref. 1; AAS88438." evidence="4" ref="1">
    <original>P</original>
    <variation>S</variation>
    <location>
        <position position="32"/>
    </location>
</feature>
<feature type="sequence conflict" description="In Ref. 1; AAS88438." evidence="4" ref="1">
    <original>D</original>
    <variation>N</variation>
    <location>
        <position position="39"/>
    </location>
</feature>
<feature type="sequence conflict" description="In Ref. 1; AAS88438." evidence="4" ref="1">
    <original>H</original>
    <variation>D</variation>
    <location>
        <position position="42"/>
    </location>
</feature>
<feature type="sequence conflict" description="In Ref. 1; AAS88438." evidence="4" ref="1">
    <original>P</original>
    <variation>Q</variation>
    <location>
        <position position="49"/>
    </location>
</feature>
<feature type="sequence conflict" description="In Ref. 1; AAS88438." evidence="4" ref="1">
    <original>A</original>
    <variation>S</variation>
    <location>
        <position position="74"/>
    </location>
</feature>
<feature type="sequence conflict" description="In Ref. 1; AAS88438." evidence="4" ref="1">
    <original>L</original>
    <variation>H</variation>
    <location>
        <position position="81"/>
    </location>
</feature>
<feature type="sequence conflict" description="In Ref. 1; AAS88438." evidence="4" ref="1">
    <original>V</original>
    <variation>I</variation>
    <location>
        <position position="87"/>
    </location>
</feature>
<feature type="sequence conflict" description="In Ref. 1; AAS88438." evidence="4" ref="1">
    <original>S</original>
    <variation>T</variation>
    <location>
        <position position="123"/>
    </location>
</feature>
<feature type="sequence conflict" description="In Ref. 1; AAS88438." evidence="4" ref="1">
    <original>E</original>
    <variation>A</variation>
    <location>
        <position position="145"/>
    </location>
</feature>
<feature type="sequence conflict" description="In Ref. 1; AAS88438." evidence="4" ref="1">
    <original>E</original>
    <variation>D</variation>
    <location>
        <position position="149"/>
    </location>
</feature>
<feature type="sequence conflict" description="In Ref. 1; AAS88438." evidence="4" ref="1">
    <original>S</original>
    <variation>T</variation>
    <location>
        <position position="153"/>
    </location>
</feature>
<feature type="sequence conflict" description="In Ref. 1; AAS88438." evidence="4" ref="1">
    <original>C</original>
    <variation>R</variation>
    <location>
        <position position="182"/>
    </location>
</feature>
<feature type="sequence conflict" description="In Ref. 1; AAS88438." evidence="4" ref="1">
    <original>E</original>
    <variation>N</variation>
    <location>
        <position position="188"/>
    </location>
</feature>
<feature type="sequence conflict" description="In Ref. 1; AAS88438." evidence="4" ref="1">
    <original>A</original>
    <variation>N</variation>
    <location>
        <position position="206"/>
    </location>
</feature>
<feature type="sequence conflict" description="In Ref. 1; AAS88438." evidence="4" ref="1">
    <original>S</original>
    <variation>T</variation>
    <location>
        <position position="212"/>
    </location>
</feature>
<feature type="sequence conflict" description="In Ref. 1; AAS88438." evidence="4" ref="1">
    <original>TD</original>
    <variation>AN</variation>
    <location>
        <begin position="230"/>
        <end position="231"/>
    </location>
</feature>
<sequence length="239" mass="26527">MMDLFETNTYLFNDLRYLEEGDHGPLQHLDMPGVSPLYDGNHSPLSPGPDNVPSETGGESSGDEHVLAPPGLRAHCEGQCLMWACKVCKRKSAPTDRRKAATLRERRRLKKINEAFDALKRKSVANPNQRLPKVEILRSAISYIERLQELLQSLDEQERGQSGASDTRNDKEQNRPSGGDYCWKKASETWPTSADHSAIINQRDGACESSASSSLLCLSSIVSSISDDKTDLRQGVQED</sequence>
<keyword id="KW-0217">Developmental protein</keyword>
<keyword id="KW-0221">Differentiation</keyword>
<keyword id="KW-0238">DNA-binding</keyword>
<keyword id="KW-0517">Myogenesis</keyword>
<keyword id="KW-0539">Nucleus</keyword>
<keyword id="KW-1185">Reference proteome</keyword>
<accession>Q6PUV5</accession>
<accession>Q4SAB2</accession>
<comment type="function">
    <text evidence="1">Involved in muscle differentiation (myogenic factor). Induces fibroblasts to differentiate into myoblasts. Probable sequence specific DNA-binding protein (By similarity).</text>
</comment>
<comment type="subunit">
    <text evidence="1">Efficient DNA binding requires dimerization with another bHLH protein.</text>
</comment>
<comment type="subcellular location">
    <subcellularLocation>
        <location evidence="2">Nucleus</location>
    </subcellularLocation>
</comment>
<comment type="sequence caution" evidence="4">
    <conflict type="erroneous gene model prediction">
        <sequence resource="EMBL-CDS" id="CAG02420"/>
    </conflict>
</comment>
<gene>
    <name type="primary">myf6</name>
    <name type="synonym">mrf4</name>
    <name type="ORF">GSTENG00021536001</name>
</gene>
<dbReference type="EMBL" id="AY576806">
    <property type="protein sequence ID" value="AAS88438.1"/>
    <property type="molecule type" value="mRNA"/>
</dbReference>
<dbReference type="EMBL" id="CAAE01014691">
    <property type="protein sequence ID" value="CAG02420.1"/>
    <property type="status" value="ALT_SEQ"/>
    <property type="molecule type" value="Genomic_DNA"/>
</dbReference>
<dbReference type="SMR" id="Q6PUV5"/>
<dbReference type="FunCoup" id="Q6PUV5">
    <property type="interactions" value="220"/>
</dbReference>
<dbReference type="STRING" id="99883.ENSTNIP00000014352"/>
<dbReference type="KEGG" id="tng:GSTEN00021536G001"/>
<dbReference type="InParanoid" id="Q6PUV5"/>
<dbReference type="OrthoDB" id="10049614at2759"/>
<dbReference type="Proteomes" id="UP000007303">
    <property type="component" value="Unassembled WGS sequence"/>
</dbReference>
<dbReference type="GO" id="GO:0005634">
    <property type="term" value="C:nucleus"/>
    <property type="evidence" value="ECO:0007669"/>
    <property type="project" value="UniProtKB-SubCell"/>
</dbReference>
<dbReference type="GO" id="GO:0000981">
    <property type="term" value="F:DNA-binding transcription factor activity, RNA polymerase II-specific"/>
    <property type="evidence" value="ECO:0007669"/>
    <property type="project" value="TreeGrafter"/>
</dbReference>
<dbReference type="GO" id="GO:0046983">
    <property type="term" value="F:protein dimerization activity"/>
    <property type="evidence" value="ECO:0007669"/>
    <property type="project" value="InterPro"/>
</dbReference>
<dbReference type="GO" id="GO:0000978">
    <property type="term" value="F:RNA polymerase II cis-regulatory region sequence-specific DNA binding"/>
    <property type="evidence" value="ECO:0007669"/>
    <property type="project" value="TreeGrafter"/>
</dbReference>
<dbReference type="GO" id="GO:0045663">
    <property type="term" value="P:positive regulation of myoblast differentiation"/>
    <property type="evidence" value="ECO:0007669"/>
    <property type="project" value="TreeGrafter"/>
</dbReference>
<dbReference type="GO" id="GO:0048743">
    <property type="term" value="P:positive regulation of skeletal muscle fiber development"/>
    <property type="evidence" value="ECO:0007669"/>
    <property type="project" value="TreeGrafter"/>
</dbReference>
<dbReference type="GO" id="GO:0035914">
    <property type="term" value="P:skeletal muscle cell differentiation"/>
    <property type="evidence" value="ECO:0007669"/>
    <property type="project" value="TreeGrafter"/>
</dbReference>
<dbReference type="FunFam" id="4.10.280.10:FF:000005">
    <property type="entry name" value="Myogenic factor"/>
    <property type="match status" value="1"/>
</dbReference>
<dbReference type="Gene3D" id="4.10.280.10">
    <property type="entry name" value="Helix-loop-helix DNA-binding domain"/>
    <property type="match status" value="1"/>
</dbReference>
<dbReference type="InterPro" id="IPR011598">
    <property type="entry name" value="bHLH_dom"/>
</dbReference>
<dbReference type="InterPro" id="IPR036638">
    <property type="entry name" value="HLH_DNA-bd_sf"/>
</dbReference>
<dbReference type="InterPro" id="IPR002546">
    <property type="entry name" value="MyoD_N"/>
</dbReference>
<dbReference type="InterPro" id="IPR039704">
    <property type="entry name" value="Myogenic_factor"/>
</dbReference>
<dbReference type="PANTHER" id="PTHR11534">
    <property type="entry name" value="MYOGENIC FACTOR"/>
    <property type="match status" value="1"/>
</dbReference>
<dbReference type="PANTHER" id="PTHR11534:SF4">
    <property type="entry name" value="MYOGENIC FACTOR 6"/>
    <property type="match status" value="1"/>
</dbReference>
<dbReference type="Pfam" id="PF01586">
    <property type="entry name" value="Basic"/>
    <property type="match status" value="1"/>
</dbReference>
<dbReference type="Pfam" id="PF00010">
    <property type="entry name" value="HLH"/>
    <property type="match status" value="1"/>
</dbReference>
<dbReference type="SMART" id="SM00520">
    <property type="entry name" value="BASIC"/>
    <property type="match status" value="1"/>
</dbReference>
<dbReference type="SMART" id="SM00353">
    <property type="entry name" value="HLH"/>
    <property type="match status" value="1"/>
</dbReference>
<dbReference type="SUPFAM" id="SSF47459">
    <property type="entry name" value="HLH, helix-loop-helix DNA-binding domain"/>
    <property type="match status" value="1"/>
</dbReference>
<dbReference type="PROSITE" id="PS50888">
    <property type="entry name" value="BHLH"/>
    <property type="match status" value="1"/>
</dbReference>
<organism>
    <name type="scientific">Tetraodon nigroviridis</name>
    <name type="common">Spotted green pufferfish</name>
    <name type="synonym">Chelonodon nigroviridis</name>
    <dbReference type="NCBI Taxonomy" id="99883"/>
    <lineage>
        <taxon>Eukaryota</taxon>
        <taxon>Metazoa</taxon>
        <taxon>Chordata</taxon>
        <taxon>Craniata</taxon>
        <taxon>Vertebrata</taxon>
        <taxon>Euteleostomi</taxon>
        <taxon>Actinopterygii</taxon>
        <taxon>Neopterygii</taxon>
        <taxon>Teleostei</taxon>
        <taxon>Neoteleostei</taxon>
        <taxon>Acanthomorphata</taxon>
        <taxon>Eupercaria</taxon>
        <taxon>Tetraodontiformes</taxon>
        <taxon>Tetradontoidea</taxon>
        <taxon>Tetraodontidae</taxon>
        <taxon>Tetraodon</taxon>
    </lineage>
</organism>
<proteinExistence type="evidence at transcript level"/>
<protein>
    <recommendedName>
        <fullName>Myogenic factor 6</fullName>
        <shortName>Myf-6</shortName>
    </recommendedName>
    <alternativeName>
        <fullName>Muscle-specific regulatory factor 4</fullName>
    </alternativeName>
</protein>
<evidence type="ECO:0000250" key="1"/>
<evidence type="ECO:0000255" key="2">
    <source>
        <dbReference type="PROSITE-ProRule" id="PRU00981"/>
    </source>
</evidence>
<evidence type="ECO:0000256" key="3">
    <source>
        <dbReference type="SAM" id="MobiDB-lite"/>
    </source>
</evidence>
<evidence type="ECO:0000305" key="4"/>
<reference key="1">
    <citation type="submission" date="2004-03" db="EMBL/GenBank/DDBJ databases">
        <title>Tetraodon nigroviridis myogenic regulatory factor 4 mRNA.</title>
        <authorList>
            <person name="MacKenzie M.G."/>
            <person name="Fernandes J.M.O."/>
            <person name="Johnston I.A."/>
            <person name="Kinghorn J.R."/>
        </authorList>
    </citation>
    <scope>NUCLEOTIDE SEQUENCE [MRNA]</scope>
</reference>
<reference key="2">
    <citation type="journal article" date="2004" name="Nature">
        <title>Genome duplication in the teleost fish Tetraodon nigroviridis reveals the early vertebrate proto-karyotype.</title>
        <authorList>
            <person name="Jaillon O."/>
            <person name="Aury J.-M."/>
            <person name="Brunet F."/>
            <person name="Petit J.-L."/>
            <person name="Stange-Thomann N."/>
            <person name="Mauceli E."/>
            <person name="Bouneau L."/>
            <person name="Fischer C."/>
            <person name="Ozouf-Costaz C."/>
            <person name="Bernot A."/>
            <person name="Nicaud S."/>
            <person name="Jaffe D."/>
            <person name="Fisher S."/>
            <person name="Lutfalla G."/>
            <person name="Dossat C."/>
            <person name="Segurens B."/>
            <person name="Dasilva C."/>
            <person name="Salanoubat M."/>
            <person name="Levy M."/>
            <person name="Boudet N."/>
            <person name="Castellano S."/>
            <person name="Anthouard V."/>
            <person name="Jubin C."/>
            <person name="Castelli V."/>
            <person name="Katinka M."/>
            <person name="Vacherie B."/>
            <person name="Biemont C."/>
            <person name="Skalli Z."/>
            <person name="Cattolico L."/>
            <person name="Poulain J."/>
            <person name="De Berardinis V."/>
            <person name="Cruaud C."/>
            <person name="Duprat S."/>
            <person name="Brottier P."/>
            <person name="Coutanceau J.-P."/>
            <person name="Gouzy J."/>
            <person name="Parra G."/>
            <person name="Lardier G."/>
            <person name="Chapple C."/>
            <person name="McKernan K.J."/>
            <person name="McEwan P."/>
            <person name="Bosak S."/>
            <person name="Kellis M."/>
            <person name="Volff J.-N."/>
            <person name="Guigo R."/>
            <person name="Zody M.C."/>
            <person name="Mesirov J."/>
            <person name="Lindblad-Toh K."/>
            <person name="Birren B."/>
            <person name="Nusbaum C."/>
            <person name="Kahn D."/>
            <person name="Robinson-Rechavi M."/>
            <person name="Laudet V."/>
            <person name="Schachter V."/>
            <person name="Quetier F."/>
            <person name="Saurin W."/>
            <person name="Scarpelli C."/>
            <person name="Wincker P."/>
            <person name="Lander E.S."/>
            <person name="Weissenbach J."/>
            <person name="Roest Crollius H."/>
        </authorList>
    </citation>
    <scope>NUCLEOTIDE SEQUENCE [LARGE SCALE GENOMIC DNA]</scope>
</reference>
<name>MYF6_TETNG</name>